<evidence type="ECO:0000255" key="1">
    <source>
        <dbReference type="HAMAP-Rule" id="MF_01328"/>
    </source>
</evidence>
<evidence type="ECO:0000256" key="2">
    <source>
        <dbReference type="SAM" id="MobiDB-lite"/>
    </source>
</evidence>
<evidence type="ECO:0000305" key="3"/>
<organism>
    <name type="scientific">Wolinella succinogenes (strain ATCC 29543 / DSM 1740 / CCUG 13145 / JCM 31913 / LMG 7466 / NCTC 11488 / FDC 602W)</name>
    <name type="common">Vibrio succinogenes</name>
    <dbReference type="NCBI Taxonomy" id="273121"/>
    <lineage>
        <taxon>Bacteria</taxon>
        <taxon>Pseudomonadati</taxon>
        <taxon>Campylobacterota</taxon>
        <taxon>Epsilonproteobacteria</taxon>
        <taxon>Campylobacterales</taxon>
        <taxon>Helicobacteraceae</taxon>
        <taxon>Wolinella</taxon>
    </lineage>
</organism>
<comment type="function">
    <text evidence="1">One of the primary rRNA binding proteins, this protein initially binds near the 5'-end of the 23S rRNA. It is important during the early stages of 50S assembly. It makes multiple contacts with different domains of the 23S rRNA in the assembled 50S subunit and ribosome.</text>
</comment>
<comment type="function">
    <text evidence="1">Forms part of the polypeptide exit tunnel.</text>
</comment>
<comment type="subunit">
    <text evidence="1">Part of the 50S ribosomal subunit.</text>
</comment>
<comment type="similarity">
    <text evidence="1">Belongs to the universal ribosomal protein uL4 family.</text>
</comment>
<feature type="chain" id="PRO_0000129314" description="Large ribosomal subunit protein uL4">
    <location>
        <begin position="1"/>
        <end position="204"/>
    </location>
</feature>
<feature type="region of interest" description="Disordered" evidence="2">
    <location>
        <begin position="49"/>
        <end position="74"/>
    </location>
</feature>
<feature type="compositionally biased region" description="Gly residues" evidence="2">
    <location>
        <begin position="55"/>
        <end position="71"/>
    </location>
</feature>
<dbReference type="EMBL" id="BX571661">
    <property type="protein sequence ID" value="CAE10741.1"/>
    <property type="molecule type" value="Genomic_DNA"/>
</dbReference>
<dbReference type="RefSeq" id="WP_011139525.1">
    <property type="nucleotide sequence ID" value="NC_005090.1"/>
</dbReference>
<dbReference type="SMR" id="Q7M8D5"/>
<dbReference type="STRING" id="273121.WS1715"/>
<dbReference type="KEGG" id="wsu:WS1715"/>
<dbReference type="eggNOG" id="COG0088">
    <property type="taxonomic scope" value="Bacteria"/>
</dbReference>
<dbReference type="HOGENOM" id="CLU_041575_5_2_7"/>
<dbReference type="Proteomes" id="UP000000422">
    <property type="component" value="Chromosome"/>
</dbReference>
<dbReference type="GO" id="GO:1990904">
    <property type="term" value="C:ribonucleoprotein complex"/>
    <property type="evidence" value="ECO:0007669"/>
    <property type="project" value="UniProtKB-KW"/>
</dbReference>
<dbReference type="GO" id="GO:0005840">
    <property type="term" value="C:ribosome"/>
    <property type="evidence" value="ECO:0007669"/>
    <property type="project" value="UniProtKB-KW"/>
</dbReference>
<dbReference type="GO" id="GO:0019843">
    <property type="term" value="F:rRNA binding"/>
    <property type="evidence" value="ECO:0007669"/>
    <property type="project" value="UniProtKB-UniRule"/>
</dbReference>
<dbReference type="GO" id="GO:0003735">
    <property type="term" value="F:structural constituent of ribosome"/>
    <property type="evidence" value="ECO:0007669"/>
    <property type="project" value="InterPro"/>
</dbReference>
<dbReference type="GO" id="GO:0006412">
    <property type="term" value="P:translation"/>
    <property type="evidence" value="ECO:0007669"/>
    <property type="project" value="UniProtKB-UniRule"/>
</dbReference>
<dbReference type="FunFam" id="3.40.1370.10:FF:000008">
    <property type="entry name" value="50S ribosomal protein L4"/>
    <property type="match status" value="1"/>
</dbReference>
<dbReference type="Gene3D" id="3.40.1370.10">
    <property type="match status" value="1"/>
</dbReference>
<dbReference type="HAMAP" id="MF_01328_B">
    <property type="entry name" value="Ribosomal_uL4_B"/>
    <property type="match status" value="1"/>
</dbReference>
<dbReference type="InterPro" id="IPR002136">
    <property type="entry name" value="Ribosomal_uL4"/>
</dbReference>
<dbReference type="InterPro" id="IPR013005">
    <property type="entry name" value="Ribosomal_uL4-like"/>
</dbReference>
<dbReference type="InterPro" id="IPR023574">
    <property type="entry name" value="Ribosomal_uL4_dom_sf"/>
</dbReference>
<dbReference type="NCBIfam" id="TIGR03953">
    <property type="entry name" value="rplD_bact"/>
    <property type="match status" value="1"/>
</dbReference>
<dbReference type="PANTHER" id="PTHR10746">
    <property type="entry name" value="50S RIBOSOMAL PROTEIN L4"/>
    <property type="match status" value="1"/>
</dbReference>
<dbReference type="PANTHER" id="PTHR10746:SF6">
    <property type="entry name" value="LARGE RIBOSOMAL SUBUNIT PROTEIN UL4M"/>
    <property type="match status" value="1"/>
</dbReference>
<dbReference type="Pfam" id="PF00573">
    <property type="entry name" value="Ribosomal_L4"/>
    <property type="match status" value="1"/>
</dbReference>
<dbReference type="SUPFAM" id="SSF52166">
    <property type="entry name" value="Ribosomal protein L4"/>
    <property type="match status" value="1"/>
</dbReference>
<proteinExistence type="inferred from homology"/>
<accession>Q7M8D5</accession>
<name>RL4_WOLSU</name>
<sequence length="204" mass="22615">MSKAIILNNELQKNGEVALPERFKEIHSHNLYLYVKSYLASLRANSAKAKKRGEVSGGGKKPWSQKGGGRARAGSITSPVFVGGGVSHGPSNNRNYDLKVNKKQKKLALQYALMEKAEQGKLYVVDSLQVDSGKTKDAYAMFKTLNERSTLFVSQISDEKTFLAFRNLKECYLADANELNAYLVAAFRSVVIEKSLFENITKEG</sequence>
<protein>
    <recommendedName>
        <fullName evidence="1">Large ribosomal subunit protein uL4</fullName>
    </recommendedName>
    <alternativeName>
        <fullName evidence="3">50S ribosomal protein L4</fullName>
    </alternativeName>
</protein>
<reference key="1">
    <citation type="journal article" date="2003" name="Proc. Natl. Acad. Sci. U.S.A.">
        <title>Complete genome sequence and analysis of Wolinella succinogenes.</title>
        <authorList>
            <person name="Baar C."/>
            <person name="Eppinger M."/>
            <person name="Raddatz G."/>
            <person name="Simon J."/>
            <person name="Lanz C."/>
            <person name="Klimmek O."/>
            <person name="Nandakumar R."/>
            <person name="Gross R."/>
            <person name="Rosinus A."/>
            <person name="Keller H."/>
            <person name="Jagtap P."/>
            <person name="Linke B."/>
            <person name="Meyer F."/>
            <person name="Lederer H."/>
            <person name="Schuster S.C."/>
        </authorList>
    </citation>
    <scope>NUCLEOTIDE SEQUENCE [LARGE SCALE GENOMIC DNA]</scope>
    <source>
        <strain>ATCC 29543 / DSM 1740 / CCUG 13145 / JCM 31913 / LMG 7466 / NCTC 11488 / FDC 602W</strain>
    </source>
</reference>
<gene>
    <name evidence="1" type="primary">rplD</name>
    <name type="ordered locus">WS1715</name>
</gene>
<keyword id="KW-1185">Reference proteome</keyword>
<keyword id="KW-0687">Ribonucleoprotein</keyword>
<keyword id="KW-0689">Ribosomal protein</keyword>
<keyword id="KW-0694">RNA-binding</keyword>
<keyword id="KW-0699">rRNA-binding</keyword>